<name>SPI1_VACCW</name>
<dbReference type="EMBL" id="D11079">
    <property type="protein sequence ID" value="BAA01852.1"/>
    <property type="molecule type" value="Genomic_DNA"/>
</dbReference>
<dbReference type="EMBL" id="M24217">
    <property type="protein sequence ID" value="AAA48344.1"/>
    <property type="molecule type" value="Genomic_DNA"/>
</dbReference>
<dbReference type="EMBL" id="D00582">
    <property type="protein sequence ID" value="BAA00459.1"/>
    <property type="molecule type" value="Genomic_DNA"/>
</dbReference>
<dbReference type="EMBL" id="M23701">
    <property type="protein sequence ID" value="AAA69589.1"/>
    <property type="molecule type" value="Genomic_DNA"/>
</dbReference>
<dbReference type="EMBL" id="AY243312">
    <property type="protein sequence ID" value="AAO89484.1"/>
    <property type="molecule type" value="Genomic_DNA"/>
</dbReference>
<dbReference type="PIR" id="A30175">
    <property type="entry name" value="WMVZS1"/>
</dbReference>
<dbReference type="RefSeq" id="YP_233087.1">
    <property type="nucleotide sequence ID" value="NC_006998.1"/>
</dbReference>
<dbReference type="SMR" id="P15058"/>
<dbReference type="MEROPS" id="I04.028"/>
<dbReference type="DNASU" id="3707582"/>
<dbReference type="GeneID" id="3707582"/>
<dbReference type="KEGG" id="vg:3707582"/>
<dbReference type="Proteomes" id="UP000000344">
    <property type="component" value="Genome"/>
</dbReference>
<dbReference type="GO" id="GO:0005615">
    <property type="term" value="C:extracellular space"/>
    <property type="evidence" value="ECO:0007669"/>
    <property type="project" value="InterPro"/>
</dbReference>
<dbReference type="GO" id="GO:0030430">
    <property type="term" value="C:host cell cytoplasm"/>
    <property type="evidence" value="ECO:0007669"/>
    <property type="project" value="UniProtKB-SubCell"/>
</dbReference>
<dbReference type="GO" id="GO:0004867">
    <property type="term" value="F:serine-type endopeptidase inhibitor activity"/>
    <property type="evidence" value="ECO:0007669"/>
    <property type="project" value="UniProtKB-KW"/>
</dbReference>
<dbReference type="CDD" id="cd19583">
    <property type="entry name" value="serpinN_SPI-1_SPI-2"/>
    <property type="match status" value="1"/>
</dbReference>
<dbReference type="Gene3D" id="2.30.39.10">
    <property type="entry name" value="Alpha-1-antitrypsin, domain 1"/>
    <property type="match status" value="1"/>
</dbReference>
<dbReference type="Gene3D" id="3.30.497.10">
    <property type="entry name" value="Antithrombin, subunit I, domain 2"/>
    <property type="match status" value="1"/>
</dbReference>
<dbReference type="InterPro" id="IPR023795">
    <property type="entry name" value="Serpin_CS"/>
</dbReference>
<dbReference type="InterPro" id="IPR023796">
    <property type="entry name" value="Serpin_dom"/>
</dbReference>
<dbReference type="InterPro" id="IPR000215">
    <property type="entry name" value="Serpin_fam"/>
</dbReference>
<dbReference type="InterPro" id="IPR036186">
    <property type="entry name" value="Serpin_sf"/>
</dbReference>
<dbReference type="InterPro" id="IPR042178">
    <property type="entry name" value="Serpin_sf_1"/>
</dbReference>
<dbReference type="InterPro" id="IPR042185">
    <property type="entry name" value="Serpin_sf_2"/>
</dbReference>
<dbReference type="PANTHER" id="PTHR11461:SF211">
    <property type="entry name" value="GH10112P-RELATED"/>
    <property type="match status" value="1"/>
</dbReference>
<dbReference type="PANTHER" id="PTHR11461">
    <property type="entry name" value="SERINE PROTEASE INHIBITOR, SERPIN"/>
    <property type="match status" value="1"/>
</dbReference>
<dbReference type="Pfam" id="PF00079">
    <property type="entry name" value="Serpin"/>
    <property type="match status" value="1"/>
</dbReference>
<dbReference type="SMART" id="SM00093">
    <property type="entry name" value="SERPIN"/>
    <property type="match status" value="1"/>
</dbReference>
<dbReference type="SUPFAM" id="SSF56574">
    <property type="entry name" value="Serpins"/>
    <property type="match status" value="1"/>
</dbReference>
<dbReference type="PROSITE" id="PS00284">
    <property type="entry name" value="SERPIN"/>
    <property type="match status" value="1"/>
</dbReference>
<feature type="chain" id="PRO_0000094136" description="Serine proteinase inhibitor 1">
    <location>
        <begin position="1"/>
        <end position="353"/>
    </location>
</feature>
<feature type="site" description="Reactive bond" evidence="1">
    <location>
        <begin position="318"/>
        <end position="319"/>
    </location>
</feature>
<comment type="function">
    <text evidence="2">Plays a role in mediating viral host range. May act to inhibit a caspase independent form of apoptosis to allow efficient virus replication in infected cells.</text>
</comment>
<comment type="subcellular location">
    <subcellularLocation>
        <location evidence="3">Host cytoplasm</location>
    </subcellularLocation>
</comment>
<comment type="similarity">
    <text evidence="4">Belongs to the serpin family. Poxviruses subfamily.</text>
</comment>
<organism>
    <name type="scientific">Vaccinia virus (strain Western Reserve)</name>
    <name type="common">VACV</name>
    <name type="synonym">Vaccinia virus (strain WR)</name>
    <dbReference type="NCBI Taxonomy" id="10254"/>
    <lineage>
        <taxon>Viruses</taxon>
        <taxon>Varidnaviria</taxon>
        <taxon>Bamfordvirae</taxon>
        <taxon>Nucleocytoviricota</taxon>
        <taxon>Pokkesviricetes</taxon>
        <taxon>Chitovirales</taxon>
        <taxon>Poxviridae</taxon>
        <taxon>Chordopoxvirinae</taxon>
        <taxon>Orthopoxvirus</taxon>
        <taxon>Vaccinia virus</taxon>
    </lineage>
</organism>
<organismHost>
    <name type="scientific">Bos taurus</name>
    <name type="common">Bovine</name>
    <dbReference type="NCBI Taxonomy" id="9913"/>
</organismHost>
<accession>P15058</accession>
<accession>Q76ZK3</accession>
<keyword id="KW-0244">Early protein</keyword>
<keyword id="KW-1035">Host cytoplasm</keyword>
<keyword id="KW-0646">Protease inhibitor</keyword>
<keyword id="KW-1185">Reference proteome</keyword>
<keyword id="KW-0722">Serine protease inhibitor</keyword>
<gene>
    <name type="primary">OPG208</name>
    <name type="synonym">SPI-1</name>
    <name type="ordered locus">VACWR205</name>
    <name type="ORF">B22R</name>
    <name type="ORF">B24R</name>
    <name type="ORF">C12L</name>
</gene>
<sequence>MDIFKELILKHTDENVLISPVSILSTLSILNHGAAGSTAEQLSKYIENMNENTPDDNNDMDVDIPYCATLATANKIYGSDSIEFHASFLQKIKDDFQTVNFNNANQTKELINEWVKTMTNGKINSLLTSPLSINTRMTVVSAVHFKAMWKYPFSKHLTYTDKFYISKNIVTSVDMMVSTENNLQYVHINELFGGFSIIDIPYEGNSSMVIILPDDIEGIYNIEKNITDEKFKKWCGMLSTKSIDLYMPKFKVEMTEPYNLVPILENLGLTNIFGYYADFSKMCNETITVEKFLHTTFIDVNEEYTEASAVTGVFMTNFSMVYRTKVYINHPFMYMIKDNTGRILFIGKYCYPQ</sequence>
<evidence type="ECO:0000250" key="1"/>
<evidence type="ECO:0000269" key="2">
    <source>
    </source>
</evidence>
<evidence type="ECO:0000269" key="3">
    <source>
    </source>
</evidence>
<evidence type="ECO:0000305" key="4"/>
<proteinExistence type="evidence at transcript level"/>
<protein>
    <recommendedName>
        <fullName>Serine proteinase inhibitor 1</fullName>
        <shortName>Serp-1</shortName>
        <shortName>Serpin-1</shortName>
    </recommendedName>
</protein>
<reference key="1">
    <citation type="journal article" date="1991" name="J. Gen. Virol.">
        <title>Nucleotide sequence of 42 kbp of vaccinia virus strain WR from near the right inverted terminal repeat.</title>
        <authorList>
            <person name="Smith G.L."/>
            <person name="Chan Y.S."/>
            <person name="Howard S.T."/>
        </authorList>
    </citation>
    <scope>NUCLEOTIDE SEQUENCE [GENOMIC DNA]</scope>
</reference>
<reference key="2">
    <citation type="journal article" date="1989" name="J. Virol.">
        <title>Vaccinia virus encodes two proteins that are structurally related to members of the plasma serine protease inhibitor superfamily.</title>
        <authorList>
            <person name="Kotwal G.J."/>
            <person name="Moss B."/>
        </authorList>
    </citation>
    <scope>NUCLEOTIDE SEQUENCE [GENOMIC DNA]</scope>
</reference>
<reference key="3">
    <citation type="journal article" date="1989" name="J. Gen. Virol.">
        <title>Vaccinia virus encodes a family of genes with homology to serine proteinase inhibitors.</title>
        <authorList>
            <person name="Smith G.L."/>
            <person name="Howard S.T."/>
            <person name="Chan Y.S."/>
        </authorList>
    </citation>
    <scope>NUCLEOTIDE SEQUENCE [GENOMIC DNA]</scope>
</reference>
<reference key="4">
    <citation type="journal article" date="1988" name="Virology">
        <title>Analysis of a large cluster of nonessential genes deleted from a vaccinia virus terminal transposition mutant.</title>
        <authorList>
            <person name="Kotwal G.J."/>
            <person name="Moss B."/>
        </authorList>
    </citation>
    <scope>NUCLEOTIDE SEQUENCE [GENOMIC DNA]</scope>
</reference>
<reference key="5">
    <citation type="submission" date="2003-02" db="EMBL/GenBank/DDBJ databases">
        <title>Sequencing of the coding region of Vaccinia-WR to an average 9-fold redundancy and an error rate of 0.16/10kb.</title>
        <authorList>
            <person name="Esposito J.J."/>
            <person name="Frace A.M."/>
            <person name="Sammons S.A."/>
            <person name="Olsen-Rasmussen M."/>
            <person name="Osborne J."/>
            <person name="Wohlhueter R."/>
        </authorList>
    </citation>
    <scope>NUCLEOTIDE SEQUENCE [LARGE SCALE GENOMIC DNA]</scope>
</reference>
<reference key="6">
    <citation type="journal article" date="1995" name="Virology">
        <title>Vaccinia virus serpins B13R (SPI-2) and B22R (SPI-1) encode M(r) 38.5 and 40K, intracellular polypeptides that do not affect virus virulence in a murine intranasal model.</title>
        <authorList>
            <person name="Kettle S."/>
            <person name="Blake N.W."/>
            <person name="Law K.M."/>
            <person name="Smith G.L."/>
        </authorList>
    </citation>
    <scope>INDUCTION</scope>
    <scope>SUBCELLULAR LOCATION</scope>
</reference>
<reference key="7">
    <citation type="journal article" date="1999" name="Virology">
        <title>Vaccinia virus serpin-1 deletion mutant exhibits a host range defect characterized by low levels of intermediate and late mRNAs.</title>
        <authorList>
            <person name="Shisler J.L."/>
            <person name="Isaacs S.N."/>
            <person name="Moss B."/>
        </authorList>
    </citation>
    <scope>FUNCTION</scope>
</reference>